<dbReference type="EMBL" id="AE014297">
    <property type="protein sequence ID" value="AAN14111.1"/>
    <property type="molecule type" value="Genomic_DNA"/>
</dbReference>
<dbReference type="RefSeq" id="NP_524531.2">
    <property type="nucleotide sequence ID" value="NM_079807.3"/>
</dbReference>
<dbReference type="SMR" id="Q8IMN6"/>
<dbReference type="FunCoup" id="Q8IMN6">
    <property type="interactions" value="11"/>
</dbReference>
<dbReference type="STRING" id="7227.FBpp0084557"/>
<dbReference type="GlyCosmos" id="Q8IMN6">
    <property type="glycosylation" value="1 site, No reported glycans"/>
</dbReference>
<dbReference type="GlyGen" id="Q8IMN6">
    <property type="glycosylation" value="1 site"/>
</dbReference>
<dbReference type="PaxDb" id="7227-FBpp0084557"/>
<dbReference type="EnsemblMetazoa" id="FBtr0085187">
    <property type="protein sequence ID" value="FBpp0084557"/>
    <property type="gene ID" value="FBgn0046886"/>
</dbReference>
<dbReference type="GeneID" id="117336"/>
<dbReference type="KEGG" id="dme:Dmel_CG31060"/>
<dbReference type="AGR" id="FB:FBgn0046886"/>
<dbReference type="CTD" id="117336"/>
<dbReference type="FlyBase" id="FBgn0046886">
    <property type="gene designation" value="Gr98c"/>
</dbReference>
<dbReference type="VEuPathDB" id="VectorBase:FBgn0046886"/>
<dbReference type="eggNOG" id="ENOG502T7X7">
    <property type="taxonomic scope" value="Eukaryota"/>
</dbReference>
<dbReference type="GeneTree" id="ENSGT01070000257301"/>
<dbReference type="HOGENOM" id="CLU_682014_0_0_1"/>
<dbReference type="InParanoid" id="Q8IMN6"/>
<dbReference type="OMA" id="HWWSFRL"/>
<dbReference type="OrthoDB" id="6366728at2759"/>
<dbReference type="PhylomeDB" id="Q8IMN6"/>
<dbReference type="BioGRID-ORCS" id="117336">
    <property type="hits" value="0 hits in 1 CRISPR screen"/>
</dbReference>
<dbReference type="GenomeRNAi" id="117336"/>
<dbReference type="PRO" id="PR:Q8IMN6"/>
<dbReference type="Proteomes" id="UP000000803">
    <property type="component" value="Chromosome 3R"/>
</dbReference>
<dbReference type="ExpressionAtlas" id="Q8IMN6">
    <property type="expression patterns" value="baseline and differential"/>
</dbReference>
<dbReference type="GO" id="GO:0030424">
    <property type="term" value="C:axon"/>
    <property type="evidence" value="ECO:0000318"/>
    <property type="project" value="GO_Central"/>
</dbReference>
<dbReference type="GO" id="GO:0030425">
    <property type="term" value="C:dendrite"/>
    <property type="evidence" value="ECO:0000318"/>
    <property type="project" value="GO_Central"/>
</dbReference>
<dbReference type="GO" id="GO:0016020">
    <property type="term" value="C:membrane"/>
    <property type="evidence" value="ECO:0000303"/>
    <property type="project" value="UniProtKB"/>
</dbReference>
<dbReference type="GO" id="GO:0043025">
    <property type="term" value="C:neuronal cell body"/>
    <property type="evidence" value="ECO:0000318"/>
    <property type="project" value="GO_Central"/>
</dbReference>
<dbReference type="GO" id="GO:0005886">
    <property type="term" value="C:plasma membrane"/>
    <property type="evidence" value="ECO:0000250"/>
    <property type="project" value="FlyBase"/>
</dbReference>
<dbReference type="GO" id="GO:0015276">
    <property type="term" value="F:ligand-gated monoatomic ion channel activity"/>
    <property type="evidence" value="ECO:0000250"/>
    <property type="project" value="FlyBase"/>
</dbReference>
<dbReference type="GO" id="GO:0034220">
    <property type="term" value="P:monoatomic ion transmembrane transport"/>
    <property type="evidence" value="ECO:0000250"/>
    <property type="project" value="FlyBase"/>
</dbReference>
<dbReference type="GO" id="GO:0050909">
    <property type="term" value="P:sensory perception of taste"/>
    <property type="evidence" value="ECO:0007669"/>
    <property type="project" value="InterPro"/>
</dbReference>
<dbReference type="GO" id="GO:0007165">
    <property type="term" value="P:signal transduction"/>
    <property type="evidence" value="ECO:0007669"/>
    <property type="project" value="UniProtKB-KW"/>
</dbReference>
<dbReference type="InterPro" id="IPR013604">
    <property type="entry name" value="7TM_chemorcpt"/>
</dbReference>
<dbReference type="PANTHER" id="PTHR21143:SF131">
    <property type="entry name" value="GUSTATORY AND ODORANT RECEPTOR 63A-RELATED"/>
    <property type="match status" value="1"/>
</dbReference>
<dbReference type="PANTHER" id="PTHR21143">
    <property type="entry name" value="INVERTEBRATE GUSTATORY RECEPTOR"/>
    <property type="match status" value="1"/>
</dbReference>
<dbReference type="Pfam" id="PF08395">
    <property type="entry name" value="7tm_7"/>
    <property type="match status" value="1"/>
</dbReference>
<organism evidence="5">
    <name type="scientific">Drosophila melanogaster</name>
    <name type="common">Fruit fly</name>
    <dbReference type="NCBI Taxonomy" id="7227"/>
    <lineage>
        <taxon>Eukaryota</taxon>
        <taxon>Metazoa</taxon>
        <taxon>Ecdysozoa</taxon>
        <taxon>Arthropoda</taxon>
        <taxon>Hexapoda</taxon>
        <taxon>Insecta</taxon>
        <taxon>Pterygota</taxon>
        <taxon>Neoptera</taxon>
        <taxon>Endopterygota</taxon>
        <taxon>Diptera</taxon>
        <taxon>Brachycera</taxon>
        <taxon>Muscomorpha</taxon>
        <taxon>Ephydroidea</taxon>
        <taxon>Drosophilidae</taxon>
        <taxon>Drosophila</taxon>
        <taxon>Sophophora</taxon>
    </lineage>
</organism>
<accession>Q8IMN6</accession>
<feature type="chain" id="PRO_0000216548" description="Putative gustatory receptor 98c">
    <location>
        <begin position="1"/>
        <end position="408"/>
    </location>
</feature>
<feature type="topological domain" description="Cytoplasmic" evidence="1">
    <location>
        <begin position="1"/>
        <end position="42"/>
    </location>
</feature>
<feature type="transmembrane region" description="Helical; Name=1" evidence="2">
    <location>
        <begin position="43"/>
        <end position="63"/>
    </location>
</feature>
<feature type="topological domain" description="Extracellular" evidence="1">
    <location>
        <begin position="64"/>
        <end position="92"/>
    </location>
</feature>
<feature type="transmembrane region" description="Helical; Name=2" evidence="2">
    <location>
        <begin position="93"/>
        <end position="113"/>
    </location>
</feature>
<feature type="topological domain" description="Cytoplasmic" evidence="1">
    <location>
        <begin position="114"/>
        <end position="146"/>
    </location>
</feature>
<feature type="transmembrane region" description="Helical; Name=3" evidence="2">
    <location>
        <begin position="147"/>
        <end position="167"/>
    </location>
</feature>
<feature type="topological domain" description="Extracellular" evidence="1">
    <location>
        <begin position="168"/>
        <end position="183"/>
    </location>
</feature>
<feature type="transmembrane region" description="Helical; Name=4" evidence="2">
    <location>
        <begin position="184"/>
        <end position="204"/>
    </location>
</feature>
<feature type="topological domain" description="Cytoplasmic" evidence="1">
    <location>
        <begin position="205"/>
        <end position="261"/>
    </location>
</feature>
<feature type="transmembrane region" description="Helical; Name=5" evidence="2">
    <location>
        <begin position="262"/>
        <end position="282"/>
    </location>
</feature>
<feature type="topological domain" description="Extracellular" evidence="1">
    <location>
        <begin position="283"/>
        <end position="296"/>
    </location>
</feature>
<feature type="transmembrane region" description="Helical; Name=6" evidence="2">
    <location>
        <begin position="297"/>
        <end position="317"/>
    </location>
</feature>
<feature type="topological domain" description="Cytoplasmic" evidence="1">
    <location>
        <begin position="318"/>
        <end position="367"/>
    </location>
</feature>
<feature type="transmembrane region" description="Helical; Name=7" evidence="2">
    <location>
        <begin position="368"/>
        <end position="388"/>
    </location>
</feature>
<feature type="topological domain" description="Extracellular" evidence="1">
    <location>
        <begin position="389"/>
        <end position="408"/>
    </location>
</feature>
<feature type="glycosylation site" description="N-linked (GlcNAc...) asparagine" evidence="2">
    <location>
        <position position="403"/>
    </location>
</feature>
<evidence type="ECO:0000250" key="1"/>
<evidence type="ECO:0000255" key="2"/>
<evidence type="ECO:0000269" key="3">
    <source>
    </source>
</evidence>
<evidence type="ECO:0000305" key="4"/>
<evidence type="ECO:0000312" key="5">
    <source>
        <dbReference type="EMBL" id="AAN14111.1"/>
    </source>
</evidence>
<protein>
    <recommendedName>
        <fullName>Putative gustatory receptor 98c</fullName>
    </recommendedName>
</protein>
<sequence length="408" mass="47392">MEMEAKRSRLLTTARPYLQVLSLFGLTPPAEFFTRTLRKRRRFCWMAGYSLYLIAILLMVFYEFHANIVSLHLEIYKFHVEDFSKVMGRTQKFLIVAIATCNQLNILLNYGRLGLIYDEIANLDLGIDKSSKNFCGKSHWWSFRLRLTLSIGLWMVIIIGVIPRLTLGRAGPFFHWVNQVLTQIILIMLQLKGPEYCLFVLLVYELILRTRHVLEQLKDDLEDFDCGARIQELCVTLKQNQLLIGRIWRLVDEIGAYFRWSMTLLFLYNGLTILHVVNWAIIRSIDPNDCCQLNRLGSITFLSFNLLLTCFFSECCVKTYNSISYILHQIGCLPTAEEFQMLKMGLKEYILQMQHLKLLFTCGGLFDINIKLFGGMLVTLCGYVIIIVQFKIQDFALIGYRQNTSDTS</sequence>
<comment type="function">
    <text evidence="1">Probable gustatory receptor which mediates acceptance or avoidance behavior, depending on its substrates.</text>
</comment>
<comment type="subcellular location">
    <subcellularLocation>
        <location evidence="1">Cell membrane</location>
        <topology evidence="1">Multi-pass membrane protein</topology>
    </subcellularLocation>
</comment>
<comment type="similarity">
    <text evidence="4">Belongs to the insect chemoreceptor superfamily. Gustatory receptor (GR) family. Gr2a subfamily.</text>
</comment>
<keyword id="KW-1003">Cell membrane</keyword>
<keyword id="KW-0325">Glycoprotein</keyword>
<keyword id="KW-0472">Membrane</keyword>
<keyword id="KW-0675">Receptor</keyword>
<keyword id="KW-1185">Reference proteome</keyword>
<keyword id="KW-0807">Transducer</keyword>
<keyword id="KW-0812">Transmembrane</keyword>
<keyword id="KW-1133">Transmembrane helix</keyword>
<gene>
    <name type="primary">Gr98c</name>
    <name type="synonym">GR98B.3</name>
    <name type="ORF">CG31060</name>
</gene>
<reference evidence="4" key="1">
    <citation type="journal article" date="2000" name="Science">
        <title>The genome sequence of Drosophila melanogaster.</title>
        <authorList>
            <person name="Adams M.D."/>
            <person name="Celniker S.E."/>
            <person name="Holt R.A."/>
            <person name="Evans C.A."/>
            <person name="Gocayne J.D."/>
            <person name="Amanatides P.G."/>
            <person name="Scherer S.E."/>
            <person name="Li P.W."/>
            <person name="Hoskins R.A."/>
            <person name="Galle R.F."/>
            <person name="George R.A."/>
            <person name="Lewis S.E."/>
            <person name="Richards S."/>
            <person name="Ashburner M."/>
            <person name="Henderson S.N."/>
            <person name="Sutton G.G."/>
            <person name="Wortman J.R."/>
            <person name="Yandell M.D."/>
            <person name="Zhang Q."/>
            <person name="Chen L.X."/>
            <person name="Brandon R.C."/>
            <person name="Rogers Y.-H.C."/>
            <person name="Blazej R.G."/>
            <person name="Champe M."/>
            <person name="Pfeiffer B.D."/>
            <person name="Wan K.H."/>
            <person name="Doyle C."/>
            <person name="Baxter E.G."/>
            <person name="Helt G."/>
            <person name="Nelson C.R."/>
            <person name="Miklos G.L.G."/>
            <person name="Abril J.F."/>
            <person name="Agbayani A."/>
            <person name="An H.-J."/>
            <person name="Andrews-Pfannkoch C."/>
            <person name="Baldwin D."/>
            <person name="Ballew R.M."/>
            <person name="Basu A."/>
            <person name="Baxendale J."/>
            <person name="Bayraktaroglu L."/>
            <person name="Beasley E.M."/>
            <person name="Beeson K.Y."/>
            <person name="Benos P.V."/>
            <person name="Berman B.P."/>
            <person name="Bhandari D."/>
            <person name="Bolshakov S."/>
            <person name="Borkova D."/>
            <person name="Botchan M.R."/>
            <person name="Bouck J."/>
            <person name="Brokstein P."/>
            <person name="Brottier P."/>
            <person name="Burtis K.C."/>
            <person name="Busam D.A."/>
            <person name="Butler H."/>
            <person name="Cadieu E."/>
            <person name="Center A."/>
            <person name="Chandra I."/>
            <person name="Cherry J.M."/>
            <person name="Cawley S."/>
            <person name="Dahlke C."/>
            <person name="Davenport L.B."/>
            <person name="Davies P."/>
            <person name="de Pablos B."/>
            <person name="Delcher A."/>
            <person name="Deng Z."/>
            <person name="Mays A.D."/>
            <person name="Dew I."/>
            <person name="Dietz S.M."/>
            <person name="Dodson K."/>
            <person name="Doup L.E."/>
            <person name="Downes M."/>
            <person name="Dugan-Rocha S."/>
            <person name="Dunkov B.C."/>
            <person name="Dunn P."/>
            <person name="Durbin K.J."/>
            <person name="Evangelista C.C."/>
            <person name="Ferraz C."/>
            <person name="Ferriera S."/>
            <person name="Fleischmann W."/>
            <person name="Fosler C."/>
            <person name="Gabrielian A.E."/>
            <person name="Garg N.S."/>
            <person name="Gelbart W.M."/>
            <person name="Glasser K."/>
            <person name="Glodek A."/>
            <person name="Gong F."/>
            <person name="Gorrell J.H."/>
            <person name="Gu Z."/>
            <person name="Guan P."/>
            <person name="Harris M."/>
            <person name="Harris N.L."/>
            <person name="Harvey D.A."/>
            <person name="Heiman T.J."/>
            <person name="Hernandez J.R."/>
            <person name="Houck J."/>
            <person name="Hostin D."/>
            <person name="Houston K.A."/>
            <person name="Howland T.J."/>
            <person name="Wei M.-H."/>
            <person name="Ibegwam C."/>
            <person name="Jalali M."/>
            <person name="Kalush F."/>
            <person name="Karpen G.H."/>
            <person name="Ke Z."/>
            <person name="Kennison J.A."/>
            <person name="Ketchum K.A."/>
            <person name="Kimmel B.E."/>
            <person name="Kodira C.D."/>
            <person name="Kraft C.L."/>
            <person name="Kravitz S."/>
            <person name="Kulp D."/>
            <person name="Lai Z."/>
            <person name="Lasko P."/>
            <person name="Lei Y."/>
            <person name="Levitsky A.A."/>
            <person name="Li J.H."/>
            <person name="Li Z."/>
            <person name="Liang Y."/>
            <person name="Lin X."/>
            <person name="Liu X."/>
            <person name="Mattei B."/>
            <person name="McIntosh T.C."/>
            <person name="McLeod M.P."/>
            <person name="McPherson D."/>
            <person name="Merkulov G."/>
            <person name="Milshina N.V."/>
            <person name="Mobarry C."/>
            <person name="Morris J."/>
            <person name="Moshrefi A."/>
            <person name="Mount S.M."/>
            <person name="Moy M."/>
            <person name="Murphy B."/>
            <person name="Murphy L."/>
            <person name="Muzny D.M."/>
            <person name="Nelson D.L."/>
            <person name="Nelson D.R."/>
            <person name="Nelson K.A."/>
            <person name="Nixon K."/>
            <person name="Nusskern D.R."/>
            <person name="Pacleb J.M."/>
            <person name="Palazzolo M."/>
            <person name="Pittman G.S."/>
            <person name="Pan S."/>
            <person name="Pollard J."/>
            <person name="Puri V."/>
            <person name="Reese M.G."/>
            <person name="Reinert K."/>
            <person name="Remington K."/>
            <person name="Saunders R.D.C."/>
            <person name="Scheeler F."/>
            <person name="Shen H."/>
            <person name="Shue B.C."/>
            <person name="Siden-Kiamos I."/>
            <person name="Simpson M."/>
            <person name="Skupski M.P."/>
            <person name="Smith T.J."/>
            <person name="Spier E."/>
            <person name="Spradling A.C."/>
            <person name="Stapleton M."/>
            <person name="Strong R."/>
            <person name="Sun E."/>
            <person name="Svirskas R."/>
            <person name="Tector C."/>
            <person name="Turner R."/>
            <person name="Venter E."/>
            <person name="Wang A.H."/>
            <person name="Wang X."/>
            <person name="Wang Z.-Y."/>
            <person name="Wassarman D.A."/>
            <person name="Weinstock G.M."/>
            <person name="Weissenbach J."/>
            <person name="Williams S.M."/>
            <person name="Woodage T."/>
            <person name="Worley K.C."/>
            <person name="Wu D."/>
            <person name="Yang S."/>
            <person name="Yao Q.A."/>
            <person name="Ye J."/>
            <person name="Yeh R.-F."/>
            <person name="Zaveri J.S."/>
            <person name="Zhan M."/>
            <person name="Zhang G."/>
            <person name="Zhao Q."/>
            <person name="Zheng L."/>
            <person name="Zheng X.H."/>
            <person name="Zhong F.N."/>
            <person name="Zhong W."/>
            <person name="Zhou X."/>
            <person name="Zhu S.C."/>
            <person name="Zhu X."/>
            <person name="Smith H.O."/>
            <person name="Gibbs R.A."/>
            <person name="Myers E.W."/>
            <person name="Rubin G.M."/>
            <person name="Venter J.C."/>
        </authorList>
    </citation>
    <scope>NUCLEOTIDE SEQUENCE [LARGE SCALE GENOMIC DNA]</scope>
    <source>
        <strain evidence="3">Berkeley</strain>
    </source>
</reference>
<reference evidence="4" key="2">
    <citation type="journal article" date="2002" name="Genome Biol.">
        <title>Annotation of the Drosophila melanogaster euchromatic genome: a systematic review.</title>
        <authorList>
            <person name="Misra S."/>
            <person name="Crosby M.A."/>
            <person name="Mungall C.J."/>
            <person name="Matthews B.B."/>
            <person name="Campbell K.S."/>
            <person name="Hradecky P."/>
            <person name="Huang Y."/>
            <person name="Kaminker J.S."/>
            <person name="Millburn G.H."/>
            <person name="Prochnik S.E."/>
            <person name="Smith C.D."/>
            <person name="Tupy J.L."/>
            <person name="Whitfield E.J."/>
            <person name="Bayraktaroglu L."/>
            <person name="Berman B.P."/>
            <person name="Bettencourt B.R."/>
            <person name="Celniker S.E."/>
            <person name="de Grey A.D.N.J."/>
            <person name="Drysdale R.A."/>
            <person name="Harris N.L."/>
            <person name="Richter J."/>
            <person name="Russo S."/>
            <person name="Schroeder A.J."/>
            <person name="Shu S.Q."/>
            <person name="Stapleton M."/>
            <person name="Yamada C."/>
            <person name="Ashburner M."/>
            <person name="Gelbart W.M."/>
            <person name="Rubin G.M."/>
            <person name="Lewis S.E."/>
        </authorList>
    </citation>
    <scope>GENOME REANNOTATION</scope>
    <source>
        <strain>Berkeley</strain>
    </source>
</reference>
<reference evidence="4" key="3">
    <citation type="journal article" date="2000" name="Science">
        <title>Candidate taste receptors in Drosophila.</title>
        <authorList>
            <person name="Clyne P.J."/>
            <person name="Warr C.G."/>
            <person name="Carlson J.R."/>
        </authorList>
    </citation>
    <scope>IDENTIFICATION</scope>
</reference>
<name>GR98C_DROME</name>
<proteinExistence type="inferred from homology"/>